<gene>
    <name evidence="1" type="primary">rpsR</name>
    <name type="ordered locus">Rxyl_0850</name>
</gene>
<evidence type="ECO:0000255" key="1">
    <source>
        <dbReference type="HAMAP-Rule" id="MF_00270"/>
    </source>
</evidence>
<evidence type="ECO:0000305" key="2"/>
<keyword id="KW-1185">Reference proteome</keyword>
<keyword id="KW-0687">Ribonucleoprotein</keyword>
<keyword id="KW-0689">Ribosomal protein</keyword>
<keyword id="KW-0694">RNA-binding</keyword>
<keyword id="KW-0699">rRNA-binding</keyword>
<proteinExistence type="inferred from homology"/>
<protein>
    <recommendedName>
        <fullName evidence="1">Small ribosomal subunit protein bS18</fullName>
    </recommendedName>
    <alternativeName>
        <fullName evidence="2">30S ribosomal protein S18</fullName>
    </alternativeName>
</protein>
<organism>
    <name type="scientific">Rubrobacter xylanophilus (strain DSM 9941 / JCM 11954 / NBRC 16129 / PRD-1)</name>
    <dbReference type="NCBI Taxonomy" id="266117"/>
    <lineage>
        <taxon>Bacteria</taxon>
        <taxon>Bacillati</taxon>
        <taxon>Actinomycetota</taxon>
        <taxon>Rubrobacteria</taxon>
        <taxon>Rubrobacterales</taxon>
        <taxon>Rubrobacteraceae</taxon>
        <taxon>Rubrobacter</taxon>
    </lineage>
</organism>
<feature type="chain" id="PRO_0000345539" description="Small ribosomal subunit protein bS18">
    <location>
        <begin position="1"/>
        <end position="81"/>
    </location>
</feature>
<name>RS18_RUBXD</name>
<dbReference type="EMBL" id="CP000386">
    <property type="protein sequence ID" value="ABG03817.1"/>
    <property type="molecule type" value="Genomic_DNA"/>
</dbReference>
<dbReference type="RefSeq" id="WP_011563835.1">
    <property type="nucleotide sequence ID" value="NC_008148.1"/>
</dbReference>
<dbReference type="SMR" id="Q1AXR1"/>
<dbReference type="STRING" id="266117.Rxyl_0850"/>
<dbReference type="KEGG" id="rxy:Rxyl_0850"/>
<dbReference type="eggNOG" id="COG0238">
    <property type="taxonomic scope" value="Bacteria"/>
</dbReference>
<dbReference type="HOGENOM" id="CLU_148710_1_0_11"/>
<dbReference type="OrthoDB" id="9812008at2"/>
<dbReference type="PhylomeDB" id="Q1AXR1"/>
<dbReference type="Proteomes" id="UP000006637">
    <property type="component" value="Chromosome"/>
</dbReference>
<dbReference type="GO" id="GO:0022627">
    <property type="term" value="C:cytosolic small ribosomal subunit"/>
    <property type="evidence" value="ECO:0007669"/>
    <property type="project" value="TreeGrafter"/>
</dbReference>
<dbReference type="GO" id="GO:0070181">
    <property type="term" value="F:small ribosomal subunit rRNA binding"/>
    <property type="evidence" value="ECO:0007669"/>
    <property type="project" value="TreeGrafter"/>
</dbReference>
<dbReference type="GO" id="GO:0003735">
    <property type="term" value="F:structural constituent of ribosome"/>
    <property type="evidence" value="ECO:0007669"/>
    <property type="project" value="InterPro"/>
</dbReference>
<dbReference type="GO" id="GO:0006412">
    <property type="term" value="P:translation"/>
    <property type="evidence" value="ECO:0007669"/>
    <property type="project" value="UniProtKB-UniRule"/>
</dbReference>
<dbReference type="FunFam" id="4.10.640.10:FF:000004">
    <property type="entry name" value="30S ribosomal protein S18"/>
    <property type="match status" value="1"/>
</dbReference>
<dbReference type="Gene3D" id="4.10.640.10">
    <property type="entry name" value="Ribosomal protein S18"/>
    <property type="match status" value="1"/>
</dbReference>
<dbReference type="HAMAP" id="MF_00270">
    <property type="entry name" value="Ribosomal_bS18"/>
    <property type="match status" value="1"/>
</dbReference>
<dbReference type="InterPro" id="IPR001648">
    <property type="entry name" value="Ribosomal_bS18"/>
</dbReference>
<dbReference type="InterPro" id="IPR036870">
    <property type="entry name" value="Ribosomal_bS18_sf"/>
</dbReference>
<dbReference type="NCBIfam" id="TIGR00165">
    <property type="entry name" value="S18"/>
    <property type="match status" value="1"/>
</dbReference>
<dbReference type="PANTHER" id="PTHR13479">
    <property type="entry name" value="30S RIBOSOMAL PROTEIN S18"/>
    <property type="match status" value="1"/>
</dbReference>
<dbReference type="PANTHER" id="PTHR13479:SF40">
    <property type="entry name" value="SMALL RIBOSOMAL SUBUNIT PROTEIN BS18M"/>
    <property type="match status" value="1"/>
</dbReference>
<dbReference type="Pfam" id="PF01084">
    <property type="entry name" value="Ribosomal_S18"/>
    <property type="match status" value="1"/>
</dbReference>
<dbReference type="PRINTS" id="PR00974">
    <property type="entry name" value="RIBOSOMALS18"/>
</dbReference>
<dbReference type="SUPFAM" id="SSF46911">
    <property type="entry name" value="Ribosomal protein S18"/>
    <property type="match status" value="1"/>
</dbReference>
<comment type="function">
    <text evidence="1">Binds as a heterodimer with protein bS6 to the central domain of the 16S rRNA, where it helps stabilize the platform of the 30S subunit.</text>
</comment>
<comment type="subunit">
    <text evidence="1">Part of the 30S ribosomal subunit. Forms a tight heterodimer with protein bS6.</text>
</comment>
<comment type="similarity">
    <text evidence="1">Belongs to the bacterial ribosomal protein bS18 family.</text>
</comment>
<sequence>MAKKKGGATTRSGKKKVCVFCKENIEYVDYKDYNMLRRFTSERGKIRARRVTGLCPQHQRETARAIKRAREMALLPYIAGR</sequence>
<reference key="1">
    <citation type="submission" date="2006-06" db="EMBL/GenBank/DDBJ databases">
        <title>Complete sequence of Rubrobacter xylanophilus DSM 9941.</title>
        <authorList>
            <consortium name="US DOE Joint Genome Institute"/>
            <person name="Copeland A."/>
            <person name="Lucas S."/>
            <person name="Lapidus A."/>
            <person name="Barry K."/>
            <person name="Detter J.C."/>
            <person name="Glavina del Rio T."/>
            <person name="Hammon N."/>
            <person name="Israni S."/>
            <person name="Dalin E."/>
            <person name="Tice H."/>
            <person name="Pitluck S."/>
            <person name="Munk A.C."/>
            <person name="Brettin T."/>
            <person name="Bruce D."/>
            <person name="Han C."/>
            <person name="Tapia R."/>
            <person name="Gilna P."/>
            <person name="Schmutz J."/>
            <person name="Larimer F."/>
            <person name="Land M."/>
            <person name="Hauser L."/>
            <person name="Kyrpides N."/>
            <person name="Lykidis A."/>
            <person name="da Costa M.S."/>
            <person name="Rainey F.A."/>
            <person name="Empadinhas N."/>
            <person name="Jolivet E."/>
            <person name="Battista J.R."/>
            <person name="Richardson P."/>
        </authorList>
    </citation>
    <scope>NUCLEOTIDE SEQUENCE [LARGE SCALE GENOMIC DNA]</scope>
    <source>
        <strain>DSM 9941 / JCM 11954 / NBRC 16129 / PRD-1</strain>
    </source>
</reference>
<accession>Q1AXR1</accession>